<organism>
    <name type="scientific">Homo sapiens</name>
    <name type="common">Human</name>
    <dbReference type="NCBI Taxonomy" id="9606"/>
    <lineage>
        <taxon>Eukaryota</taxon>
        <taxon>Metazoa</taxon>
        <taxon>Chordata</taxon>
        <taxon>Craniata</taxon>
        <taxon>Vertebrata</taxon>
        <taxon>Euteleostomi</taxon>
        <taxon>Mammalia</taxon>
        <taxon>Eutheria</taxon>
        <taxon>Euarchontoglires</taxon>
        <taxon>Primates</taxon>
        <taxon>Haplorrhini</taxon>
        <taxon>Catarrhini</taxon>
        <taxon>Hominidae</taxon>
        <taxon>Homo</taxon>
    </lineage>
</organism>
<evidence type="ECO:0000255" key="1">
    <source>
        <dbReference type="PROSITE-ProRule" id="PRU00042"/>
    </source>
</evidence>
<evidence type="ECO:0000256" key="2">
    <source>
        <dbReference type="SAM" id="MobiDB-lite"/>
    </source>
</evidence>
<evidence type="ECO:0000269" key="3">
    <source>
    </source>
</evidence>
<evidence type="ECO:0000269" key="4">
    <source>
    </source>
</evidence>
<evidence type="ECO:0000269" key="5">
    <source>
    </source>
</evidence>
<evidence type="ECO:0000269" key="6">
    <source>
    </source>
</evidence>
<evidence type="ECO:0000303" key="7">
    <source>
    </source>
</evidence>
<evidence type="ECO:0000303" key="8">
    <source>
    </source>
</evidence>
<evidence type="ECO:0000303" key="9">
    <source>
    </source>
</evidence>
<evidence type="ECO:0000303" key="10">
    <source>
    </source>
</evidence>
<evidence type="ECO:0000305" key="11"/>
<evidence type="ECO:0000312" key="12">
    <source>
        <dbReference type="HGNC" id="HGNC:30899"/>
    </source>
</evidence>
<evidence type="ECO:0007744" key="13">
    <source>
        <dbReference type="PDB" id="8PK6"/>
    </source>
</evidence>
<evidence type="ECO:0007744" key="14">
    <source>
    </source>
</evidence>
<evidence type="ECO:0007744" key="15">
    <source>
    </source>
</evidence>
<evidence type="ECO:0007744" key="16">
    <source>
    </source>
</evidence>
<evidence type="ECO:0007744" key="17">
    <source>
    </source>
</evidence>
<evidence type="ECO:0007829" key="18">
    <source>
        <dbReference type="PDB" id="8PK6"/>
    </source>
</evidence>
<name>ZN655_HUMAN</name>
<comment type="function">
    <text evidence="11">Probable transcription factor.</text>
</comment>
<comment type="subunit">
    <text evidence="4 5 6">Interacts with VAV1 and CDK4 (PubMed:15558030). Interacts with INTS13; promoting association with the integrator complex (PubMed:38823386, PubMed:38906142).</text>
</comment>
<comment type="interaction">
    <interactant intactId="EBI-625509">
        <id>Q8N720</id>
    </interactant>
    <interactant intactId="EBI-12883224">
        <id>Q9UKU0-7</id>
        <label>ACSL6</label>
    </interactant>
    <organismsDiffer>false</organismsDiffer>
    <experiments>3</experiments>
</comment>
<comment type="interaction">
    <interactant intactId="EBI-625509">
        <id>Q8N720</id>
    </interactant>
    <interactant intactId="EBI-17183751">
        <id>X5D778</id>
        <label>ANKRD11</label>
    </interactant>
    <organismsDiffer>false</organismsDiffer>
    <experiments>3</experiments>
</comment>
<comment type="interaction">
    <interactant intactId="EBI-625509">
        <id>Q8N720</id>
    </interactant>
    <interactant intactId="EBI-541426">
        <id>Q9BXS5</id>
        <label>AP1M1</label>
    </interactant>
    <organismsDiffer>false</organismsDiffer>
    <experiments>3</experiments>
</comment>
<comment type="interaction">
    <interactant intactId="EBI-625509">
        <id>Q8N720</id>
    </interactant>
    <interactant intactId="EBI-6425205">
        <id>Q9NWX5</id>
        <label>ASB6</label>
    </interactant>
    <organismsDiffer>false</organismsDiffer>
    <experiments>3</experiments>
</comment>
<comment type="interaction">
    <interactant intactId="EBI-625509">
        <id>Q8N720</id>
    </interactant>
    <interactant intactId="EBI-743231">
        <id>O95671</id>
        <label>ASMTL</label>
    </interactant>
    <organismsDiffer>false</organismsDiffer>
    <experiments>3</experiments>
</comment>
<comment type="interaction">
    <interactant intactId="EBI-625509">
        <id>Q8N720</id>
    </interactant>
    <interactant intactId="EBI-745689">
        <id>Q7L5A3</id>
        <label>ATOSB</label>
    </interactant>
    <organismsDiffer>false</organismsDiffer>
    <experiments>3</experiments>
</comment>
<comment type="interaction">
    <interactant intactId="EBI-625509">
        <id>Q8N720</id>
    </interactant>
    <interactant intactId="EBI-1166928">
        <id>Q8N5M1</id>
        <label>ATPAF2</label>
    </interactant>
    <organismsDiffer>false</organismsDiffer>
    <experiments>3</experiments>
</comment>
<comment type="interaction">
    <interactant intactId="EBI-625509">
        <id>Q8N720</id>
    </interactant>
    <interactant intactId="EBI-473181">
        <id>Q99728</id>
        <label>BARD1</label>
    </interactant>
    <organismsDiffer>false</organismsDiffer>
    <experiments>3</experiments>
</comment>
<comment type="interaction">
    <interactant intactId="EBI-625509">
        <id>Q8N720</id>
    </interactant>
    <interactant intactId="EBI-10193358">
        <id>Q96GS4</id>
        <label>BORCS6</label>
    </interactant>
    <organismsDiffer>false</organismsDiffer>
    <experiments>3</experiments>
</comment>
<comment type="interaction">
    <interactant intactId="EBI-625509">
        <id>Q8N720</id>
    </interactant>
    <interactant intactId="EBI-358049">
        <id>Q13895</id>
        <label>BYSL</label>
    </interactant>
    <organismsDiffer>false</organismsDiffer>
    <experiments>3</experiments>
</comment>
<comment type="interaction">
    <interactant intactId="EBI-625509">
        <id>Q8N720</id>
    </interactant>
    <interactant intactId="EBI-8466055">
        <id>Q6P047</id>
        <label>C8orf74</label>
    </interactant>
    <organismsDiffer>false</organismsDiffer>
    <experiments>3</experiments>
</comment>
<comment type="interaction">
    <interactant intactId="EBI-625509">
        <id>Q8N720</id>
    </interactant>
    <interactant intactId="EBI-1765641">
        <id>Q9Y6W3</id>
        <label>CAPN7</label>
    </interactant>
    <organismsDiffer>false</organismsDiffer>
    <experiments>3</experiments>
</comment>
<comment type="interaction">
    <interactant intactId="EBI-625509">
        <id>Q8N720</id>
    </interactant>
    <interactant intactId="EBI-751319">
        <id>Q9H257</id>
        <label>CARD9</label>
    </interactant>
    <organismsDiffer>false</organismsDiffer>
    <experiments>3</experiments>
</comment>
<comment type="interaction">
    <interactant intactId="EBI-625509">
        <id>Q8N720</id>
    </interactant>
    <interactant intactId="EBI-11530605">
        <id>Q9H257-2</id>
        <label>CARD9</label>
    </interactant>
    <organismsDiffer>false</organismsDiffer>
    <experiments>3</experiments>
</comment>
<comment type="interaction">
    <interactant intactId="EBI-625509">
        <id>Q8N720</id>
    </interactant>
    <interactant intactId="EBI-741724">
        <id>Q8NA61</id>
        <label>CBY2</label>
    </interactant>
    <organismsDiffer>false</organismsDiffer>
    <experiments>4</experiments>
</comment>
<comment type="interaction">
    <interactant intactId="EBI-625509">
        <id>Q8N720</id>
    </interactant>
    <interactant intactId="EBI-744311">
        <id>Q8IYX3</id>
        <label>CCDC116</label>
    </interactant>
    <organismsDiffer>false</organismsDiffer>
    <experiments>3</experiments>
</comment>
<comment type="interaction">
    <interactant intactId="EBI-625509">
        <id>Q8N720</id>
    </interactant>
    <interactant intactId="EBI-17766379">
        <id>H3BU77</id>
        <label>CCDC179</label>
    </interactant>
    <organismsDiffer>false</organismsDiffer>
    <experiments>3</experiments>
</comment>
<comment type="interaction">
    <interactant intactId="EBI-625509">
        <id>Q8N720</id>
    </interactant>
    <interactant intactId="EBI-10961624">
        <id>Q2TAC2-2</id>
        <label>CCDC57</label>
    </interactant>
    <organismsDiffer>false</organismsDiffer>
    <experiments>3</experiments>
</comment>
<comment type="interaction">
    <interactant intactId="EBI-625509">
        <id>Q8N720</id>
    </interactant>
    <interactant intactId="EBI-8466689">
        <id>Q96AQ1</id>
        <label>CCDC74A</label>
    </interactant>
    <organismsDiffer>false</organismsDiffer>
    <experiments>3</experiments>
</comment>
<comment type="interaction">
    <interactant intactId="EBI-625509">
        <id>Q8N720</id>
    </interactant>
    <interactant intactId="EBI-10175300">
        <id>Q8TD31-3</id>
        <label>CCHCR1</label>
    </interactant>
    <organismsDiffer>false</organismsDiffer>
    <experiments>3</experiments>
</comment>
<comment type="interaction">
    <interactant intactId="EBI-625509">
        <id>Q8N720</id>
    </interactant>
    <interactant intactId="EBI-741406">
        <id>P51946</id>
        <label>CCNH</label>
    </interactant>
    <organismsDiffer>false</organismsDiffer>
    <experiments>3</experiments>
</comment>
<comment type="interaction">
    <interactant intactId="EBI-625509">
        <id>Q8N720</id>
    </interactant>
    <interactant intactId="EBI-295634">
        <id>Q16543</id>
        <label>CDC37</label>
    </interactant>
    <organismsDiffer>false</organismsDiffer>
    <experiments>3</experiments>
</comment>
<comment type="interaction">
    <interactant intactId="EBI-625509">
        <id>Q8N720</id>
    </interactant>
    <interactant intactId="EBI-295644">
        <id>P11802</id>
        <label>CDK4</label>
    </interactant>
    <organismsDiffer>false</organismsDiffer>
    <experiments>6</experiments>
</comment>
<comment type="interaction">
    <interactant intactId="EBI-625509">
        <id>Q8N720</id>
    </interactant>
    <interactant intactId="EBI-11063830">
        <id>Q86X02</id>
        <label>CDR2L</label>
    </interactant>
    <organismsDiffer>false</organismsDiffer>
    <experiments>3</experiments>
</comment>
<comment type="interaction">
    <interactant intactId="EBI-625509">
        <id>Q8N720</id>
    </interactant>
    <interactant intactId="EBI-1104570">
        <id>Q8IYX8</id>
        <label>CEP57L1</label>
    </interactant>
    <organismsDiffer>false</organismsDiffer>
    <experiments>3</experiments>
</comment>
<comment type="interaction">
    <interactant intactId="EBI-625509">
        <id>Q8N720</id>
    </interactant>
    <interactant intactId="EBI-12012272">
        <id>Q9UBL6-2</id>
        <label>CPNE7</label>
    </interactant>
    <organismsDiffer>false</organismsDiffer>
    <experiments>3</experiments>
</comment>
<comment type="interaction">
    <interactant intactId="EBI-625509">
        <id>Q8N720</id>
    </interactant>
    <interactant intactId="EBI-739773">
        <id>Q9BSW2</id>
        <label>CRACR2A</label>
    </interactant>
    <organismsDiffer>false</organismsDiffer>
    <experiments>3</experiments>
</comment>
<comment type="interaction">
    <interactant intactId="EBI-625509">
        <id>Q8N720</id>
    </interactant>
    <interactant intactId="EBI-5453285">
        <id>Q2TBE0</id>
        <label>CWF19L2</label>
    </interactant>
    <organismsDiffer>false</organismsDiffer>
    <experiments>3</experiments>
</comment>
<comment type="interaction">
    <interactant intactId="EBI-625509">
        <id>Q8N720</id>
    </interactant>
    <interactant intactId="EBI-12205861">
        <id>Q8NFT6-2</id>
        <label>DBF4B</label>
    </interactant>
    <organismsDiffer>false</organismsDiffer>
    <experiments>3</experiments>
</comment>
<comment type="interaction">
    <interactant intactId="EBI-625509">
        <id>Q8N720</id>
    </interactant>
    <interactant intactId="EBI-748597">
        <id>Q05D60</id>
        <label>DEUP1</label>
    </interactant>
    <organismsDiffer>false</organismsDiffer>
    <experiments>3</experiments>
</comment>
<comment type="interaction">
    <interactant intactId="EBI-625509">
        <id>Q8N720</id>
    </interactant>
    <interactant intactId="EBI-359932">
        <id>Q92785</id>
        <label>DPF2</label>
    </interactant>
    <organismsDiffer>false</organismsDiffer>
    <experiments>3</experiments>
</comment>
<comment type="interaction">
    <interactant intactId="EBI-625509">
        <id>Q8N720</id>
    </interactant>
    <interactant intactId="EBI-6591081">
        <id>Q13115</id>
        <label>DUSP4</label>
    </interactant>
    <organismsDiffer>false</organismsDiffer>
    <experiments>3</experiments>
</comment>
<comment type="interaction">
    <interactant intactId="EBI-625509">
        <id>Q8N720</id>
    </interactant>
    <interactant intactId="EBI-1175354">
        <id>Q9H6Z9</id>
        <label>EGLN3</label>
    </interactant>
    <organismsDiffer>false</organismsDiffer>
    <experiments>3</experiments>
</comment>
<comment type="interaction">
    <interactant intactId="EBI-625509">
        <id>Q8N720</id>
    </interactant>
    <interactant intactId="EBI-74090">
        <id>Q13541</id>
        <label>EIF4EBP1</label>
    </interactant>
    <organismsDiffer>false</organismsDiffer>
    <experiments>3</experiments>
</comment>
<comment type="interaction">
    <interactant intactId="EBI-625509">
        <id>Q8N720</id>
    </interactant>
    <interactant intactId="EBI-11748557">
        <id>Q9Y6C2-2</id>
        <label>EMILIN1</label>
    </interactant>
    <organismsDiffer>false</organismsDiffer>
    <experiments>3</experiments>
</comment>
<comment type="interaction">
    <interactant intactId="EBI-625509">
        <id>Q8N720</id>
    </interactant>
    <interactant intactId="EBI-6448852">
        <id>Q9UI08-2</id>
        <label>EVL</label>
    </interactant>
    <organismsDiffer>false</organismsDiffer>
    <experiments>3</experiments>
</comment>
<comment type="interaction">
    <interactant intactId="EBI-625509">
        <id>Q8N720</id>
    </interactant>
    <interactant intactId="EBI-371876">
        <id>Q9NQT4</id>
        <label>EXOSC5</label>
    </interactant>
    <organismsDiffer>false</organismsDiffer>
    <experiments>5</experiments>
</comment>
<comment type="interaction">
    <interactant intactId="EBI-625509">
        <id>Q8N720</id>
    </interactant>
    <interactant intactId="EBI-12057609">
        <id>O95864-3</id>
        <label>FADS2</label>
    </interactant>
    <organismsDiffer>false</organismsDiffer>
    <experiments>3</experiments>
</comment>
<comment type="interaction">
    <interactant intactId="EBI-625509">
        <id>Q8N720</id>
    </interactant>
    <interactant intactId="EBI-11993062">
        <id>Q8TBF8</id>
        <label>FAM81A</label>
    </interactant>
    <organismsDiffer>false</organismsDiffer>
    <experiments>3</experiments>
</comment>
<comment type="interaction">
    <interactant intactId="EBI-625509">
        <id>Q8N720</id>
    </interactant>
    <interactant intactId="EBI-10290827">
        <id>Q96LP2</id>
        <label>FAM81B</label>
    </interactant>
    <organismsDiffer>false</organismsDiffer>
    <experiments>3</experiments>
</comment>
<comment type="interaction">
    <interactant intactId="EBI-625509">
        <id>Q8N720</id>
    </interactant>
    <interactant intactId="EBI-6658203">
        <id>Q86YD7</id>
        <label>FAM90A1</label>
    </interactant>
    <organismsDiffer>false</organismsDiffer>
    <experiments>3</experiments>
</comment>
<comment type="interaction">
    <interactant intactId="EBI-625509">
        <id>Q8N720</id>
    </interactant>
    <interactant intactId="EBI-2513774">
        <id>O95363</id>
        <label>FARS2</label>
    </interactant>
    <organismsDiffer>false</organismsDiffer>
    <experiments>3</experiments>
</comment>
<comment type="interaction">
    <interactant intactId="EBI-625509">
        <id>Q8N720</id>
    </interactant>
    <interactant intactId="EBI-701903">
        <id>Q14192</id>
        <label>FHL2</label>
    </interactant>
    <organismsDiffer>false</organismsDiffer>
    <experiments>3</experiments>
</comment>
<comment type="interaction">
    <interactant intactId="EBI-625509">
        <id>Q8N720</id>
    </interactant>
    <interactant intactId="EBI-744771">
        <id>O75344</id>
        <label>FKBP6</label>
    </interactant>
    <organismsDiffer>false</organismsDiffer>
    <experiments>3</experiments>
</comment>
<comment type="interaction">
    <interactant intactId="EBI-625509">
        <id>Q8N720</id>
    </interactant>
    <interactant intactId="EBI-744104">
        <id>P55040</id>
        <label>GEM</label>
    </interactant>
    <organismsDiffer>false</organismsDiffer>
    <experiments>3</experiments>
</comment>
<comment type="interaction">
    <interactant intactId="EBI-625509">
        <id>Q8N720</id>
    </interactant>
    <interactant intactId="EBI-744302">
        <id>P14136</id>
        <label>GFAP</label>
    </interactant>
    <organismsDiffer>false</organismsDiffer>
    <experiments>3</experiments>
</comment>
<comment type="interaction">
    <interactant intactId="EBI-625509">
        <id>Q8N720</id>
    </interactant>
    <interactant intactId="EBI-353467">
        <id>P09211</id>
        <label>GSTP1</label>
    </interactant>
    <organismsDiffer>false</organismsDiffer>
    <experiments>3</experiments>
</comment>
<comment type="interaction">
    <interactant intactId="EBI-625509">
        <id>Q8N720</id>
    </interactant>
    <interactant intactId="EBI-11978177">
        <id>Q96NT3-2</id>
        <label>GUCD1</label>
    </interactant>
    <organismsDiffer>false</organismsDiffer>
    <experiments>3</experiments>
</comment>
<comment type="interaction">
    <interactant intactId="EBI-625509">
        <id>Q8N720</id>
    </interactant>
    <interactant intactId="EBI-11956675">
        <id>Q9GZV7</id>
        <label>HAPLN2</label>
    </interactant>
    <organismsDiffer>false</organismsDiffer>
    <experiments>3</experiments>
</comment>
<comment type="interaction">
    <interactant intactId="EBI-625509">
        <id>Q8N720</id>
    </interactant>
    <interactant intactId="EBI-5460660">
        <id>Q96MH2</id>
        <label>HEXIM2</label>
    </interactant>
    <organismsDiffer>false</organismsDiffer>
    <experiments>3</experiments>
</comment>
<comment type="interaction">
    <interactant intactId="EBI-625509">
        <id>Q8N720</id>
    </interactant>
    <interactant intactId="EBI-748420">
        <id>Q9NSC5</id>
        <label>HOMER3</label>
    </interactant>
    <organismsDiffer>false</organismsDiffer>
    <experiments>3</experiments>
</comment>
<comment type="interaction">
    <interactant intactId="EBI-625509">
        <id>Q8N720</id>
    </interactant>
    <interactant intactId="EBI-746704">
        <id>Q9UJC3</id>
        <label>HOOK1</label>
    </interactant>
    <organismsDiffer>false</organismsDiffer>
    <experiments>3</experiments>
</comment>
<comment type="interaction">
    <interactant intactId="EBI-625509">
        <id>Q8N720</id>
    </interactant>
    <interactant intactId="EBI-3893317">
        <id>P09067</id>
        <label>HOXB5</label>
    </interactant>
    <organismsDiffer>false</organismsDiffer>
    <experiments>3</experiments>
</comment>
<comment type="interaction">
    <interactant intactId="EBI-625509">
        <id>Q8N720</id>
    </interactant>
    <interactant intactId="EBI-749311">
        <id>P37235</id>
        <label>HPCAL1</label>
    </interactant>
    <organismsDiffer>false</organismsDiffer>
    <experiments>3</experiments>
</comment>
<comment type="interaction">
    <interactant intactId="EBI-625509">
        <id>Q8N720</id>
    </interactant>
    <interactant intactId="EBI-3918847">
        <id>Q9H2F3</id>
        <label>HSD3B7</label>
    </interactant>
    <organismsDiffer>false</organismsDiffer>
    <experiments>3</experiments>
</comment>
<comment type="interaction">
    <interactant intactId="EBI-625509">
        <id>Q8N720</id>
    </interactant>
    <interactant intactId="EBI-466029">
        <id>P42858</id>
        <label>HTT</label>
    </interactant>
    <organismsDiffer>false</organismsDiffer>
    <experiments>14</experiments>
</comment>
<comment type="interaction">
    <interactant intactId="EBI-625509">
        <id>Q8N720</id>
    </interactant>
    <interactant intactId="EBI-13341351">
        <id>Q13907-2</id>
        <label>IDI1</label>
    </interactant>
    <organismsDiffer>false</organismsDiffer>
    <experiments>3</experiments>
</comment>
<comment type="interaction">
    <interactant intactId="EBI-625509">
        <id>Q8N720</id>
    </interactant>
    <interactant intactId="EBI-747481">
        <id>Q9NV31</id>
        <label>IMP3</label>
    </interactant>
    <organismsDiffer>false</organismsDiffer>
    <experiments>3</experiments>
</comment>
<comment type="interaction">
    <interactant intactId="EBI-625509">
        <id>Q8N720</id>
    </interactant>
    <interactant intactId="EBI-536703">
        <id>Q9NVR2</id>
        <label>INTS10</label>
    </interactant>
    <organismsDiffer>false</organismsDiffer>
    <experiments>3</experiments>
</comment>
<comment type="interaction">
    <interactant intactId="EBI-625509">
        <id>Q8N720</id>
    </interactant>
    <interactant intactId="EBI-10990676">
        <id>Q96PC2</id>
        <label>IP6K3</label>
    </interactant>
    <organismsDiffer>false</organismsDiffer>
    <experiments>3</experiments>
</comment>
<comment type="interaction">
    <interactant intactId="EBI-625509">
        <id>Q8N720</id>
    </interactant>
    <interactant intactId="EBI-1223434">
        <id>P18084</id>
        <label>ITGB5</label>
    </interactant>
    <organismsDiffer>false</organismsDiffer>
    <experiments>3</experiments>
</comment>
<comment type="interaction">
    <interactant intactId="EBI-625509">
        <id>Q8N720</id>
    </interactant>
    <interactant intactId="EBI-17181882">
        <id>O75564-2</id>
        <label>JRK</label>
    </interactant>
    <organismsDiffer>false</organismsDiffer>
    <experiments>3</experiments>
</comment>
<comment type="interaction">
    <interactant intactId="EBI-625509">
        <id>Q8N720</id>
    </interactant>
    <interactant intactId="EBI-2125614">
        <id>Q9BVG8</id>
        <label>KIFC3</label>
    </interactant>
    <organismsDiffer>false</organismsDiffer>
    <experiments>3</experiments>
</comment>
<comment type="interaction">
    <interactant intactId="EBI-625509">
        <id>Q8N720</id>
    </interactant>
    <interactant intactId="EBI-14069005">
        <id>Q9BVG8-5</id>
        <label>KIFC3</label>
    </interactant>
    <organismsDiffer>false</organismsDiffer>
    <experiments>3</experiments>
</comment>
<comment type="interaction">
    <interactant intactId="EBI-625509">
        <id>Q8N720</id>
    </interactant>
    <interactant intactId="EBI-10171697">
        <id>Q6A162</id>
        <label>KRT40</label>
    </interactant>
    <organismsDiffer>false</organismsDiffer>
    <experiments>3</experiments>
</comment>
<comment type="interaction">
    <interactant intactId="EBI-625509">
        <id>Q8N720</id>
    </interactant>
    <interactant intactId="EBI-2952745">
        <id>Q01546</id>
        <label>KRT76</label>
    </interactant>
    <organismsDiffer>false</organismsDiffer>
    <experiments>3</experiments>
</comment>
<comment type="interaction">
    <interactant intactId="EBI-625509">
        <id>Q8N720</id>
    </interactant>
    <interactant intactId="EBI-1049371">
        <id>P78386</id>
        <label>KRT85</label>
    </interactant>
    <organismsDiffer>false</organismsDiffer>
    <experiments>3</experiments>
</comment>
<comment type="interaction">
    <interactant intactId="EBI-625509">
        <id>Q8N720</id>
    </interactant>
    <interactant intactId="EBI-9996498">
        <id>O43790</id>
        <label>KRT86</label>
    </interactant>
    <organismsDiffer>false</organismsDiffer>
    <experiments>3</experiments>
</comment>
<comment type="interaction">
    <interactant intactId="EBI-625509">
        <id>Q8N720</id>
    </interactant>
    <interactant intactId="EBI-3958099">
        <id>P26371</id>
        <label>KRTAP5-9</label>
    </interactant>
    <organismsDiffer>false</organismsDiffer>
    <experiments>3</experiments>
</comment>
<comment type="interaction">
    <interactant intactId="EBI-625509">
        <id>Q8N720</id>
    </interactant>
    <interactant intactId="EBI-11958364">
        <id>Q9BYQ0</id>
        <label>KRTAP9-8</label>
    </interactant>
    <organismsDiffer>false</organismsDiffer>
    <experiments>3</experiments>
</comment>
<comment type="interaction">
    <interactant intactId="EBI-625509">
        <id>Q8N720</id>
    </interactant>
    <interactant intactId="EBI-10245291">
        <id>Q5T5A8</id>
        <label>LCE3C</label>
    </interactant>
    <organismsDiffer>false</organismsDiffer>
    <experiments>3</experiments>
</comment>
<comment type="interaction">
    <interactant intactId="EBI-625509">
        <id>Q8N720</id>
    </interactant>
    <interactant intactId="EBI-10246358">
        <id>Q5TA78</id>
        <label>LCE4A</label>
    </interactant>
    <organismsDiffer>false</organismsDiffer>
    <experiments>3</experiments>
</comment>
<comment type="interaction">
    <interactant intactId="EBI-625509">
        <id>Q8N720</id>
    </interactant>
    <interactant intactId="EBI-11955689">
        <id>Q5TCM9</id>
        <label>LCE5A</label>
    </interactant>
    <organismsDiffer>false</organismsDiffer>
    <experiments>3</experiments>
</comment>
<comment type="interaction">
    <interactant intactId="EBI-625509">
        <id>Q8N720</id>
    </interactant>
    <interactant intactId="EBI-10274069">
        <id>Q8TCE9</id>
        <label>LGALS14</label>
    </interactant>
    <organismsDiffer>false</organismsDiffer>
    <experiments>5</experiments>
</comment>
<comment type="interaction">
    <interactant intactId="EBI-625509">
        <id>Q8N720</id>
    </interactant>
    <interactant intactId="EBI-11959475">
        <id>P25791-3</id>
        <label>LMO2</label>
    </interactant>
    <organismsDiffer>false</organismsDiffer>
    <experiments>3</experiments>
</comment>
<comment type="interaction">
    <interactant intactId="EBI-625509">
        <id>Q8N720</id>
    </interactant>
    <interactant intactId="EBI-739832">
        <id>Q8TBB1</id>
        <label>LNX1</label>
    </interactant>
    <organismsDiffer>false</organismsDiffer>
    <experiments>5</experiments>
</comment>
<comment type="interaction">
    <interactant intactId="EBI-625509">
        <id>Q8N720</id>
    </interactant>
    <interactant intactId="EBI-2683507">
        <id>Q8N5G2</id>
        <label>MACO1</label>
    </interactant>
    <organismsDiffer>false</organismsDiffer>
    <experiments>3</experiments>
</comment>
<comment type="interaction">
    <interactant intactId="EBI-625509">
        <id>Q8N720</id>
    </interactant>
    <interactant intactId="EBI-77889">
        <id>Q9UI95</id>
        <label>MAD2L2</label>
    </interactant>
    <organismsDiffer>false</organismsDiffer>
    <experiments>3</experiments>
</comment>
<comment type="interaction">
    <interactant intactId="EBI-625509">
        <id>Q8N720</id>
    </interactant>
    <interactant intactId="EBI-10239285">
        <id>Q96E03</id>
        <label>MAGEA2B</label>
    </interactant>
    <organismsDiffer>false</organismsDiffer>
    <experiments>3</experiments>
</comment>
<comment type="interaction">
    <interactant intactId="EBI-625509">
        <id>Q8N720</id>
    </interactant>
    <interactant intactId="EBI-11978579">
        <id>O95983-2</id>
        <label>MBD3</label>
    </interactant>
    <organismsDiffer>false</organismsDiffer>
    <experiments>3</experiments>
</comment>
<comment type="interaction">
    <interactant intactId="EBI-625509">
        <id>Q8N720</id>
    </interactant>
    <interactant intactId="EBI-394678">
        <id>Q13503</id>
        <label>MED21</label>
    </interactant>
    <organismsDiffer>false</organismsDiffer>
    <experiments>3</experiments>
</comment>
<comment type="interaction">
    <interactant intactId="EBI-625509">
        <id>Q8N720</id>
    </interactant>
    <interactant intactId="EBI-1104564">
        <id>Q9Y316</id>
        <label>MEMO1</label>
    </interactant>
    <organismsDiffer>false</organismsDiffer>
    <experiments>3</experiments>
</comment>
<comment type="interaction">
    <interactant intactId="EBI-625509">
        <id>Q8N720</id>
    </interactant>
    <interactant intactId="EBI-8652459">
        <id>Q8WXB1</id>
        <label>METTL21A</label>
    </interactant>
    <organismsDiffer>false</organismsDiffer>
    <experiments>3</experiments>
</comment>
<comment type="interaction">
    <interactant intactId="EBI-625509">
        <id>Q8N720</id>
    </interactant>
    <interactant intactId="EBI-1104552">
        <id>Q9NYP9</id>
        <label>MIS18A</label>
    </interactant>
    <organismsDiffer>false</organismsDiffer>
    <experiments>3</experiments>
</comment>
<comment type="interaction">
    <interactant intactId="EBI-625509">
        <id>Q8N720</id>
    </interactant>
    <interactant intactId="EBI-2691489">
        <id>Q8WV92</id>
        <label>MITD1</label>
    </interactant>
    <organismsDiffer>false</organismsDiffer>
    <experiments>3</experiments>
</comment>
<comment type="interaction">
    <interactant intactId="EBI-625509">
        <id>Q8N720</id>
    </interactant>
    <interactant intactId="EBI-716157">
        <id>Q13368</id>
        <label>MPP3</label>
    </interactant>
    <organismsDiffer>false</organismsDiffer>
    <experiments>3</experiments>
</comment>
<comment type="interaction">
    <interactant intactId="EBI-625509">
        <id>Q8N720</id>
    </interactant>
    <interactant intactId="EBI-995714">
        <id>Q9Y605</id>
        <label>MRFAP1</label>
    </interactant>
    <organismsDiffer>false</organismsDiffer>
    <experiments>3</experiments>
</comment>
<comment type="interaction">
    <interactant intactId="EBI-625509">
        <id>Q8N720</id>
    </interactant>
    <interactant intactId="EBI-723426">
        <id>Q13084</id>
        <label>MRPL28</label>
    </interactant>
    <organismsDiffer>false</organismsDiffer>
    <experiments>3</experiments>
</comment>
<comment type="interaction">
    <interactant intactId="EBI-625509">
        <id>Q8N720</id>
    </interactant>
    <interactant intactId="EBI-744593">
        <id>Q96QG7</id>
        <label>MTMR9</label>
    </interactant>
    <organismsDiffer>false</organismsDiffer>
    <experiments>3</experiments>
</comment>
<comment type="interaction">
    <interactant intactId="EBI-625509">
        <id>Q8N720</id>
    </interactant>
    <interactant intactId="EBI-10211940">
        <id>P50539-3</id>
        <label>MXI1</label>
    </interactant>
    <organismsDiffer>false</organismsDiffer>
    <experiments>3</experiments>
</comment>
<comment type="interaction">
    <interactant intactId="EBI-625509">
        <id>Q8N720</id>
    </interactant>
    <interactant intactId="EBI-747693">
        <id>P41227</id>
        <label>NAA10</label>
    </interactant>
    <organismsDiffer>false</organismsDiffer>
    <experiments>3</experiments>
</comment>
<comment type="interaction">
    <interactant intactId="EBI-625509">
        <id>Q8N720</id>
    </interactant>
    <interactant intactId="EBI-715849">
        <id>O14777</id>
        <label>NDC80</label>
    </interactant>
    <organismsDiffer>false</organismsDiffer>
    <experiments>3</experiments>
</comment>
<comment type="interaction">
    <interactant intactId="EBI-625509">
        <id>Q8N720</id>
    </interactant>
    <interactant intactId="EBI-10172876">
        <id>Q7Z6G3-2</id>
        <label>NECAB2</label>
    </interactant>
    <organismsDiffer>false</organismsDiffer>
    <experiments>3</experiments>
</comment>
<comment type="interaction">
    <interactant intactId="EBI-625509">
        <id>Q8N720</id>
    </interactant>
    <interactant intactId="EBI-10311409">
        <id>Q9NPG2</id>
        <label>NGB</label>
    </interactant>
    <organismsDiffer>false</organismsDiffer>
    <experiments>3</experiments>
</comment>
<comment type="interaction">
    <interactant intactId="EBI-625509">
        <id>Q8N720</id>
    </interactant>
    <interactant intactId="EBI-16147014">
        <id>Q6P988</id>
        <label>NOTUM</label>
    </interactant>
    <organismsDiffer>false</organismsDiffer>
    <experiments>3</experiments>
</comment>
<comment type="interaction">
    <interactant intactId="EBI-625509">
        <id>Q8N720</id>
    </interactant>
    <interactant intactId="EBI-355720">
        <id>O43809</id>
        <label>NUDT21</label>
    </interactant>
    <organismsDiffer>false</organismsDiffer>
    <experiments>3</experiments>
</comment>
<comment type="interaction">
    <interactant intactId="EBI-625509">
        <id>Q8N720</id>
    </interactant>
    <interactant intactId="EBI-10297093">
        <id>Q9BRQ3</id>
        <label>NUDT22</label>
    </interactant>
    <organismsDiffer>false</organismsDiffer>
    <experiments>3</experiments>
</comment>
<comment type="interaction">
    <interactant intactId="EBI-625509">
        <id>Q8N720</id>
    </interactant>
    <interactant intactId="EBI-10698339">
        <id>Q9NPJ8-3</id>
        <label>NXT2</label>
    </interactant>
    <organismsDiffer>false</organismsDiffer>
    <experiments>3</experiments>
</comment>
<comment type="interaction">
    <interactant intactId="EBI-625509">
        <id>Q8N720</id>
    </interactant>
    <interactant intactId="EBI-536879">
        <id>O43482</id>
        <label>OIP5</label>
    </interactant>
    <organismsDiffer>false</organismsDiffer>
    <experiments>3</experiments>
</comment>
<comment type="interaction">
    <interactant intactId="EBI-625509">
        <id>Q8N720</id>
    </interactant>
    <interactant intactId="EBI-1054396">
        <id>Q01804</id>
        <label>OTUD4</label>
    </interactant>
    <organismsDiffer>false</organismsDiffer>
    <experiments>3</experiments>
</comment>
<comment type="interaction">
    <interactant intactId="EBI-625509">
        <id>Q8N720</id>
    </interactant>
    <interactant intactId="EBI-1753251">
        <id>Q99572</id>
        <label>P2RX7</label>
    </interactant>
    <organismsDiffer>false</organismsDiffer>
    <experiments>3</experiments>
</comment>
<comment type="interaction">
    <interactant intactId="EBI-625509">
        <id>Q8N720</id>
    </interactant>
    <interactant intactId="EBI-741171">
        <id>Q96AL5</id>
        <label>PBX3</label>
    </interactant>
    <organismsDiffer>false</organismsDiffer>
    <experiments>3</experiments>
</comment>
<comment type="interaction">
    <interactant intactId="EBI-625509">
        <id>Q8N720</id>
    </interactant>
    <interactant intactId="EBI-11956269">
        <id>Q92824-2</id>
        <label>PCSK5</label>
    </interactant>
    <organismsDiffer>false</organismsDiffer>
    <experiments>3</experiments>
</comment>
<comment type="interaction">
    <interactant intactId="EBI-625509">
        <id>Q8N720</id>
    </interactant>
    <interactant intactId="EBI-709807">
        <id>P16118</id>
        <label>PFKFB1</label>
    </interactant>
    <organismsDiffer>false</organismsDiffer>
    <experiments>3</experiments>
</comment>
<comment type="interaction">
    <interactant intactId="EBI-625509">
        <id>Q8N720</id>
    </interactant>
    <interactant intactId="EBI-1055079">
        <id>O15160</id>
        <label>POLR1C</label>
    </interactant>
    <organismsDiffer>false</organismsDiffer>
    <experiments>3</experiments>
</comment>
<comment type="interaction">
    <interactant intactId="EBI-625509">
        <id>Q8N720</id>
    </interactant>
    <interactant intactId="EBI-11986293">
        <id>P0CG20</id>
        <label>PRR35</label>
    </interactant>
    <organismsDiffer>false</organismsDiffer>
    <experiments>3</experiments>
</comment>
<comment type="interaction">
    <interactant intactId="EBI-625509">
        <id>Q8N720</id>
    </interactant>
    <interactant intactId="EBI-726876">
        <id>Q6NUQ1</id>
        <label>RINT1</label>
    </interactant>
    <organismsDiffer>false</organismsDiffer>
    <experiments>5</experiments>
</comment>
<comment type="interaction">
    <interactant intactId="EBI-625509">
        <id>Q8N720</id>
    </interactant>
    <interactant intactId="EBI-717006">
        <id>P23921</id>
        <label>RRM1</label>
    </interactant>
    <organismsDiffer>false</organismsDiffer>
    <experiments>3</experiments>
</comment>
<comment type="interaction">
    <interactant intactId="EBI-625509">
        <id>Q8N720</id>
    </interactant>
    <interactant intactId="EBI-11984663">
        <id>Q06455-2</id>
        <label>RUNX1T1</label>
    </interactant>
    <organismsDiffer>false</organismsDiffer>
    <experiments>3</experiments>
</comment>
<comment type="interaction">
    <interactant intactId="EBI-625509">
        <id>Q8N720</id>
    </interactant>
    <interactant intactId="EBI-747035">
        <id>Q9H788</id>
        <label>SH2D4A</label>
    </interactant>
    <organismsDiffer>false</organismsDiffer>
    <experiments>3</experiments>
</comment>
<comment type="interaction">
    <interactant intactId="EBI-625509">
        <id>Q8N720</id>
    </interactant>
    <interactant intactId="EBI-12161783">
        <id>O43699-3</id>
        <label>SIGLEC6</label>
    </interactant>
    <organismsDiffer>false</organismsDiffer>
    <experiments>3</experiments>
</comment>
<comment type="interaction">
    <interactant intactId="EBI-625509">
        <id>Q8N720</id>
    </interactant>
    <interactant intactId="EBI-7244836">
        <id>Q9UP95</id>
        <label>SLC12A4</label>
    </interactant>
    <organismsDiffer>false</organismsDiffer>
    <experiments>3</experiments>
</comment>
<comment type="interaction">
    <interactant intactId="EBI-625509">
        <id>Q8N720</id>
    </interactant>
    <interactant intactId="EBI-358489">
        <id>Q96GM5</id>
        <label>SMARCD1</label>
    </interactant>
    <organismsDiffer>false</organismsDiffer>
    <experiments>3</experiments>
</comment>
<comment type="interaction">
    <interactant intactId="EBI-625509">
        <id>Q8N720</id>
    </interactant>
    <interactant intactId="EBI-2872322">
        <id>Q9H0W8</id>
        <label>SMG9</label>
    </interactant>
    <organismsDiffer>false</organismsDiffer>
    <experiments>3</experiments>
</comment>
<comment type="interaction">
    <interactant intactId="EBI-625509">
        <id>Q8N720</id>
    </interactant>
    <interactant intactId="EBI-12023934">
        <id>Q5MJ10</id>
        <label>SPANXN2</label>
    </interactant>
    <organismsDiffer>false</organismsDiffer>
    <experiments>3</experiments>
</comment>
<comment type="interaction">
    <interactant intactId="EBI-625509">
        <id>Q8N720</id>
    </interactant>
    <interactant intactId="EBI-5235340">
        <id>Q7Z699</id>
        <label>SPRED1</label>
    </interactant>
    <organismsDiffer>false</organismsDiffer>
    <experiments>3</experiments>
</comment>
<comment type="interaction">
    <interactant intactId="EBI-625509">
        <id>Q8N720</id>
    </interactant>
    <interactant intactId="EBI-12290641">
        <id>O43610</id>
        <label>SPRY3</label>
    </interactant>
    <organismsDiffer>false</organismsDiffer>
    <experiments>3</experiments>
</comment>
<comment type="interaction">
    <interactant intactId="EBI-625509">
        <id>Q8N720</id>
    </interactant>
    <interactant intactId="EBI-17766455">
        <id>A0A286YEY3</id>
        <label>SRGAP2B</label>
    </interactant>
    <organismsDiffer>false</organismsDiffer>
    <experiments>3</experiments>
</comment>
<comment type="interaction">
    <interactant intactId="EBI-625509">
        <id>Q8N720</id>
    </interactant>
    <interactant intactId="EBI-10245139">
        <id>Q5T011-5</id>
        <label>SZT2</label>
    </interactant>
    <organismsDiffer>false</organismsDiffer>
    <experiments>3</experiments>
</comment>
<comment type="interaction">
    <interactant intactId="EBI-625509">
        <id>Q8N720</id>
    </interactant>
    <interactant intactId="EBI-11955057">
        <id>Q8N8B7-2</id>
        <label>TCEANC</label>
    </interactant>
    <organismsDiffer>false</organismsDiffer>
    <experiments>3</experiments>
</comment>
<comment type="interaction">
    <interactant intactId="EBI-625509">
        <id>Q8N720</id>
    </interactant>
    <interactant intactId="EBI-750487">
        <id>Q8WW24</id>
        <label>TEKT4</label>
    </interactant>
    <organismsDiffer>false</organismsDiffer>
    <experiments>3</experiments>
</comment>
<comment type="interaction">
    <interactant intactId="EBI-625509">
        <id>Q8N720</id>
    </interactant>
    <interactant intactId="EBI-751954">
        <id>O15482</id>
        <label>TEX28P2</label>
    </interactant>
    <organismsDiffer>false</organismsDiffer>
    <experiments>3</experiments>
</comment>
<comment type="interaction">
    <interactant intactId="EBI-625509">
        <id>Q8N720</id>
    </interactant>
    <interactant intactId="EBI-3925505">
        <id>Q8TBB0</id>
        <label>THAP6</label>
    </interactant>
    <organismsDiffer>false</organismsDiffer>
    <experiments>3</experiments>
</comment>
<comment type="interaction">
    <interactant intactId="EBI-625509">
        <id>Q8N720</id>
    </interactant>
    <interactant intactId="EBI-1200391">
        <id>P62072</id>
        <label>TIMM10</label>
    </interactant>
    <organismsDiffer>false</organismsDiffer>
    <experiments>3</experiments>
</comment>
<comment type="interaction">
    <interactant intactId="EBI-625509">
        <id>Q8N720</id>
    </interactant>
    <interactant intactId="EBI-740492">
        <id>Q9UKI8</id>
        <label>TLK1</label>
    </interactant>
    <organismsDiffer>false</organismsDiffer>
    <experiments>3</experiments>
</comment>
<comment type="interaction">
    <interactant intactId="EBI-625509">
        <id>Q8N720</id>
    </interactant>
    <interactant intactId="EBI-355744">
        <id>Q12933</id>
        <label>TRAF2</label>
    </interactant>
    <organismsDiffer>false</organismsDiffer>
    <experiments>3</experiments>
</comment>
<comment type="interaction">
    <interactant intactId="EBI-625509">
        <id>Q8N720</id>
    </interactant>
    <interactant intactId="EBI-523498">
        <id>O00463</id>
        <label>TRAF5</label>
    </interactant>
    <organismsDiffer>false</organismsDiffer>
    <experiments>3</experiments>
</comment>
<comment type="interaction">
    <interactant intactId="EBI-625509">
        <id>Q8N720</id>
    </interactant>
    <interactant intactId="EBI-11961968">
        <id>P0DI81-3</id>
        <label>TRAPPC2</label>
    </interactant>
    <organismsDiffer>false</organismsDiffer>
    <experiments>3</experiments>
</comment>
<comment type="interaction">
    <interactant intactId="EBI-625509">
        <id>Q8N720</id>
    </interactant>
    <interactant intactId="EBI-725997">
        <id>Q8WV44</id>
        <label>TRIM41</label>
    </interactant>
    <organismsDiffer>false</organismsDiffer>
    <experiments>3</experiments>
</comment>
<comment type="interaction">
    <interactant intactId="EBI-625509">
        <id>Q8N720</id>
    </interactant>
    <interactant intactId="EBI-2341648">
        <id>Q6ZMU5</id>
        <label>TRIM72</label>
    </interactant>
    <organismsDiffer>false</organismsDiffer>
    <experiments>3</experiments>
</comment>
<comment type="interaction">
    <interactant intactId="EBI-625509">
        <id>Q8N720</id>
    </interactant>
    <interactant intactId="EBI-308511">
        <id>Q9UJ04</id>
        <label>TSPYL4</label>
    </interactant>
    <organismsDiffer>false</organismsDiffer>
    <experiments>3</experiments>
</comment>
<comment type="interaction">
    <interactant intactId="EBI-625509">
        <id>Q8N720</id>
    </interactant>
    <interactant intactId="EBI-707554">
        <id>O14530</id>
        <label>TXNDC9</label>
    </interactant>
    <organismsDiffer>false</organismsDiffer>
    <experiments>3</experiments>
</comment>
<comment type="interaction">
    <interactant intactId="EBI-625509">
        <id>Q8N720</id>
    </interactant>
    <interactant intactId="EBI-739895">
        <id>Q8N6Y0</id>
        <label>USHBP1</label>
    </interactant>
    <organismsDiffer>false</organismsDiffer>
    <experiments>3</experiments>
</comment>
<comment type="interaction">
    <interactant intactId="EBI-625509">
        <id>Q8N720</id>
    </interactant>
    <interactant intactId="EBI-625518">
        <id>P15498</id>
        <label>VAV1</label>
    </interactant>
    <organismsDiffer>false</organismsDiffer>
    <experiments>5</experiments>
</comment>
<comment type="interaction">
    <interactant intactId="EBI-625509">
        <id>Q8N720</id>
    </interactant>
    <interactant intactId="EBI-7207091">
        <id>O14972</id>
        <label>VPS26C</label>
    </interactant>
    <organismsDiffer>false</organismsDiffer>
    <experiments>3</experiments>
</comment>
<comment type="interaction">
    <interactant intactId="EBI-625509">
        <id>Q8N720</id>
    </interactant>
    <interactant intactId="EBI-9031083">
        <id>Q9Y2B5</id>
        <label>VPS9D1</label>
    </interactant>
    <organismsDiffer>false</organismsDiffer>
    <experiments>3</experiments>
</comment>
<comment type="interaction">
    <interactant intactId="EBI-625509">
        <id>Q8N720</id>
    </interactant>
    <interactant intactId="EBI-295222">
        <id>P23025</id>
        <label>XPA</label>
    </interactant>
    <organismsDiffer>false</organismsDiffer>
    <experiments>3</experiments>
</comment>
<comment type="interaction">
    <interactant intactId="EBI-625509">
        <id>Q8N720</id>
    </interactant>
    <interactant intactId="EBI-11721624">
        <id>P62699</id>
        <label>YPEL5</label>
    </interactant>
    <organismsDiffer>false</organismsDiffer>
    <experiments>3</experiments>
</comment>
<comment type="interaction">
    <interactant intactId="EBI-625509">
        <id>Q8N720</id>
    </interactant>
    <interactant intactId="EBI-711925">
        <id>Q05516</id>
        <label>ZBTB16</label>
    </interactant>
    <organismsDiffer>false</organismsDiffer>
    <experiments>3</experiments>
</comment>
<comment type="interaction">
    <interactant intactId="EBI-625509">
        <id>Q8N720</id>
    </interactant>
    <interactant intactId="EBI-14104088">
        <id>Q53FD0-2</id>
        <label>ZC2HC1C</label>
    </interactant>
    <organismsDiffer>false</organismsDiffer>
    <experiments>5</experiments>
</comment>
<comment type="interaction">
    <interactant intactId="EBI-625509">
        <id>Q8N720</id>
    </interactant>
    <interactant intactId="EBI-373456">
        <id>Q9Y3S2</id>
        <label>ZNF330</label>
    </interactant>
    <organismsDiffer>false</organismsDiffer>
    <experiments>3</experiments>
</comment>
<comment type="interaction">
    <interactant intactId="EBI-625509">
        <id>Q8N720</id>
    </interactant>
    <interactant intactId="EBI-2555731">
        <id>Q9H707</id>
        <label>ZNF552</label>
    </interactant>
    <organismsDiffer>false</organismsDiffer>
    <experiments>3</experiments>
</comment>
<comment type="interaction">
    <interactant intactId="EBI-625509">
        <id>Q8N720</id>
    </interactant>
    <interactant intactId="EBI-11985915">
        <id>Q5T619</id>
        <label>ZNF648</label>
    </interactant>
    <organismsDiffer>false</organismsDiffer>
    <experiments>3</experiments>
</comment>
<comment type="interaction">
    <interactant intactId="EBI-625509">
        <id>Q8N720</id>
    </interactant>
    <interactant intactId="EBI-10240849">
        <id>Q3KQV3</id>
        <label>ZNF792</label>
    </interactant>
    <organismsDiffer>false</organismsDiffer>
    <experiments>3</experiments>
</comment>
<comment type="interaction">
    <interactant intactId="EBI-625509">
        <id>Q8N720</id>
    </interactant>
    <interactant intactId="EBI-11962574">
        <id>Q96EG3</id>
        <label>ZNF837</label>
    </interactant>
    <organismsDiffer>false</organismsDiffer>
    <experiments>3</experiments>
</comment>
<comment type="subcellular location">
    <subcellularLocation>
        <location evidence="11">Nucleus</location>
    </subcellularLocation>
</comment>
<comment type="alternative products">
    <event type="alternative splicing"/>
    <isoform>
        <id>Q8N720-1</id>
        <name>1</name>
        <sequence type="displayed"/>
    </isoform>
    <isoform>
        <id>Q8N720-2</id>
        <name>2</name>
        <sequence type="described" ref="VSP_036030 VSP_036031"/>
    </isoform>
    <isoform>
        <id>Q8N720-3</id>
        <name>3</name>
        <sequence type="described" ref="VSP_041157"/>
    </isoform>
    <isoform>
        <id>Q8N720-4</id>
        <name>4</name>
        <sequence type="described" ref="VSP_044809 VSP_044810"/>
    </isoform>
</comment>
<comment type="similarity">
    <text evidence="11">Belongs to the krueppel C2H2-type zinc-finger protein family.</text>
</comment>
<protein>
    <recommendedName>
        <fullName evidence="11">Zinc finger protein 655</fullName>
    </recommendedName>
    <alternativeName>
        <fullName evidence="9">Vav-interacting Krueppel-like protein</fullName>
    </alternativeName>
</protein>
<proteinExistence type="evidence at protein level"/>
<feature type="chain" id="PRO_0000047700" description="Zinc finger protein 655">
    <location>
        <begin position="1"/>
        <end position="491"/>
    </location>
</feature>
<feature type="zinc finger region" description="C2H2-type 1" evidence="1">
    <location>
        <begin position="212"/>
        <end position="234"/>
    </location>
</feature>
<feature type="zinc finger region" description="C2H2-type 2" evidence="1">
    <location>
        <begin position="240"/>
        <end position="262"/>
    </location>
</feature>
<feature type="zinc finger region" description="C2H2-type 3" evidence="1">
    <location>
        <begin position="303"/>
        <end position="325"/>
    </location>
</feature>
<feature type="zinc finger region" description="C2H2-type 4" evidence="1">
    <location>
        <begin position="330"/>
        <end position="353"/>
    </location>
</feature>
<feature type="zinc finger region" description="C2H2-type 5" evidence="1">
    <location>
        <begin position="380"/>
        <end position="402"/>
    </location>
</feature>
<feature type="zinc finger region" description="C2H2-type 6" evidence="1">
    <location>
        <begin position="408"/>
        <end position="430"/>
    </location>
</feature>
<feature type="region of interest" description="Disordered" evidence="2">
    <location>
        <begin position="1"/>
        <end position="52"/>
    </location>
</feature>
<feature type="compositionally biased region" description="Polar residues" evidence="2">
    <location>
        <begin position="15"/>
        <end position="26"/>
    </location>
</feature>
<feature type="cross-link" description="Glycyl lysine isopeptide (Lys-Gly) (interchain with G-Cter in SUMO2)" evidence="17">
    <location>
        <position position="77"/>
    </location>
</feature>
<feature type="cross-link" description="Glycyl lysine isopeptide (Lys-Gly) (interchain with G-Cter in SUMO2)" evidence="17">
    <location>
        <position position="190"/>
    </location>
</feature>
<feature type="cross-link" description="Glycyl lysine isopeptide (Lys-Gly) (interchain with G-Cter in SUMO2)" evidence="17">
    <location>
        <position position="201"/>
    </location>
</feature>
<feature type="splice variant" id="VSP_041157" description="In isoform 3." evidence="7">
    <original>G</original>
    <variation>GGFPISKPDGISQLEQDLQVFDLETKTREVLRDDCS</variation>
    <location>
        <position position="45"/>
    </location>
</feature>
<feature type="splice variant" id="VSP_036030" description="In isoform 2." evidence="8">
    <original>DGETREENKLLIPKQKISEEVHSYKVRVGRLKHDITQVPETREVYKSEDRLERLQEILRKFLYLEREFRQITISKETFTSEKNNECHEPEKSFSLDSTIDADQRVLRIQNTDDNDKYDMSFNQNSASGKHEHLNLT</original>
    <variation>APPVPQVPALPREGSPGDQAAALLTARYQEFVTFEDVAVHLTREEWGYLDPVQRDLYREVMLENYGNVVSLGILLRLPTTRIHSVNSCPALSHTQASAFSGETLAVLTAGISKRWPKYRLPIDIARPCSETPFPRL</variation>
    <location>
        <begin position="46"/>
        <end position="181"/>
    </location>
</feature>
<feature type="splice variant" id="VSP_044809" description="In isoform 4." evidence="7">
    <original>DGETREENKLLIPKQKISEEVHSYKVRVGRLKHDITQVPETREVYKSEDRLERLQEILRKFLYLE</original>
    <variation>GILLRLPTTRIHSVNSCPALSHTQASAFSGETLAVLTAGISKRWPKYRLPIDIARPCSETPFPRL</variation>
    <location>
        <begin position="46"/>
        <end position="110"/>
    </location>
</feature>
<feature type="splice variant" id="VSP_044810" description="In isoform 4." evidence="7">
    <location>
        <begin position="111"/>
        <end position="491"/>
    </location>
</feature>
<feature type="splice variant" id="VSP_036031" description="In isoform 2." evidence="8">
    <location>
        <begin position="182"/>
        <end position="491"/>
    </location>
</feature>
<feature type="sequence variant" id="VAR_028165" description="In dbSNP:rs17853754." evidence="3">
    <original>E</original>
    <variation>D</variation>
    <location>
        <position position="52"/>
    </location>
</feature>
<feature type="mutagenesis site" description="Decreased interaction with INTS13 component of the integrator complex." evidence="5">
    <original>IL</original>
    <variation>AA</variation>
    <location>
        <begin position="102"/>
        <end position="103"/>
    </location>
</feature>
<feature type="mutagenesis site" description="Abolished interaction with INTS13 component of the integrator complex." evidence="6">
    <original>I</original>
    <variation>E</variation>
    <location>
        <position position="102"/>
    </location>
</feature>
<feature type="mutagenesis site" description="Decreased interaction with INTS13 component of the integrator complex." evidence="5">
    <original>FL</original>
    <variation>AA</variation>
    <location>
        <begin position="106"/>
        <end position="107"/>
    </location>
</feature>
<feature type="mutagenesis site" description="Abolished interaction with INTS13 component of the integrator complex." evidence="6">
    <original>F</original>
    <variation>G</variation>
    <location>
        <position position="106"/>
    </location>
</feature>
<feature type="mutagenesis site" description="Does not affect interaction with INTS13 component of the integrator complex." evidence="6">
    <original>Y</original>
    <variation>A</variation>
    <location>
        <position position="108"/>
    </location>
</feature>
<feature type="mutagenesis site" description="Abolished interaction with INTS13 component of the integrator complex." evidence="6">
    <original>F</original>
    <variation>G</variation>
    <location>
        <position position="113"/>
    </location>
</feature>
<feature type="mutagenesis site" description="Does not affect interaction with INTS13 component of the integrator complex." evidence="5">
    <original>RI</original>
    <variation>AA</variation>
    <location>
        <begin position="152"/>
        <end position="153"/>
    </location>
</feature>
<feature type="sequence conflict" description="In Ref. 2; BAH14395." evidence="11" ref="2">
    <original>L</original>
    <variation>S</variation>
    <location>
        <position position="178"/>
    </location>
</feature>
<feature type="helix" evidence="18">
    <location>
        <begin position="96"/>
        <end position="109"/>
    </location>
</feature>
<feature type="helix" evidence="18">
    <location>
        <begin position="111"/>
        <end position="114"/>
    </location>
</feature>
<feature type="modified residue" description="Phosphoserine" evidence="14 15 16">
    <location sequence="Q8N720-2">
        <position position="60"/>
    </location>
</feature>
<sequence>MEEIPAQEAAGSPRVQFQSLETQSECLSPEPQFVQDTDMEQGLTGDGETREENKLLIPKQKISEEVHSYKVRVGRLKHDITQVPETREVYKSEDRLERLQEILRKFLYLEREFRQITISKETFTSEKNNECHEPEKSFSLDSTIDADQRVLRIQNTDDNDKYDMSFNQNSASGKHEHLNLTEDFQSSECKESLMDLSHLNKWESIPNTEKSYKCDVCGKIFHQSSALTRHQRIHTREKPYKCKECEKSFSQSSSLSRHKRIHTREKPYKCEASDKSCEASDKSCSPSSGIIQHKKIHTRAKSYKCSSCERVFSRSVHLTQHQKIHKEMPCKCTVCGSDFCHTSYLLEHQRVHHEEKAYEYDEYGLAYIKQQGIHFREKPYTCSECGKDFRLNSHLIQHQRIHTGEKAHECNECGKAFSQTSCLIQHHKMHRKEKSYECNEYEGSFSHSSDLILQQEVLTRQKAFDCDVWEKNSSQRAHLVQHQSIHTKENS</sequence>
<gene>
    <name evidence="10 12" type="primary">ZNF655</name>
    <name evidence="9" type="synonym">VIK</name>
</gene>
<dbReference type="EMBL" id="AY099353">
    <property type="protein sequence ID" value="AAM33786.1"/>
    <property type="molecule type" value="mRNA"/>
</dbReference>
<dbReference type="EMBL" id="AK027114">
    <property type="status" value="NOT_ANNOTATED_CDS"/>
    <property type="molecule type" value="mRNA"/>
</dbReference>
<dbReference type="EMBL" id="AK304785">
    <property type="protein sequence ID" value="BAG65536.1"/>
    <property type="molecule type" value="mRNA"/>
</dbReference>
<dbReference type="EMBL" id="AK314593">
    <property type="protein sequence ID" value="BAG37165.1"/>
    <property type="molecule type" value="mRNA"/>
</dbReference>
<dbReference type="EMBL" id="AK316024">
    <property type="protein sequence ID" value="BAH14395.1"/>
    <property type="molecule type" value="mRNA"/>
</dbReference>
<dbReference type="EMBL" id="AC005020">
    <property type="protein sequence ID" value="AAS02017.1"/>
    <property type="molecule type" value="Genomic_DNA"/>
</dbReference>
<dbReference type="EMBL" id="CH236956">
    <property type="protein sequence ID" value="EAL23871.1"/>
    <property type="molecule type" value="Genomic_DNA"/>
</dbReference>
<dbReference type="EMBL" id="CH471091">
    <property type="protein sequence ID" value="EAW76650.1"/>
    <property type="molecule type" value="Genomic_DNA"/>
</dbReference>
<dbReference type="EMBL" id="CH236956">
    <property type="protein sequence ID" value="EAL23870.1"/>
    <property type="molecule type" value="Genomic_DNA"/>
</dbReference>
<dbReference type="EMBL" id="CH471091">
    <property type="protein sequence ID" value="EAW76651.1"/>
    <property type="molecule type" value="Genomic_DNA"/>
</dbReference>
<dbReference type="EMBL" id="BC000823">
    <property type="protein sequence ID" value="AAH00823.1"/>
    <property type="molecule type" value="mRNA"/>
</dbReference>
<dbReference type="EMBL" id="BC004288">
    <property type="protein sequence ID" value="AAH04288.1"/>
    <property type="molecule type" value="mRNA"/>
</dbReference>
<dbReference type="EMBL" id="BC007378">
    <property type="protein sequence ID" value="AAH07378.1"/>
    <property type="molecule type" value="mRNA"/>
</dbReference>
<dbReference type="EMBL" id="BC011816">
    <property type="protein sequence ID" value="AAH11816.1"/>
    <property type="molecule type" value="mRNA"/>
</dbReference>
<dbReference type="EMBL" id="BC024770">
    <property type="protein sequence ID" value="AAH24770.1"/>
    <property type="molecule type" value="mRNA"/>
</dbReference>
<dbReference type="EMBL" id="BC037407">
    <property type="protein sequence ID" value="AAH37407.1"/>
    <property type="molecule type" value="mRNA"/>
</dbReference>
<dbReference type="CCDS" id="CCDS34695.1">
    <molecule id="Q8N720-4"/>
</dbReference>
<dbReference type="CCDS" id="CCDS47655.1">
    <molecule id="Q8N720-3"/>
</dbReference>
<dbReference type="CCDS" id="CCDS5669.1">
    <molecule id="Q8N720-1"/>
</dbReference>
<dbReference type="CCDS" id="CCDS5670.1">
    <molecule id="Q8N720-2"/>
</dbReference>
<dbReference type="RefSeq" id="NP_001009958.1">
    <molecule id="Q8N720-4"/>
    <property type="nucleotide sequence ID" value="NM_001009958.1"/>
</dbReference>
<dbReference type="RefSeq" id="NP_001009960.1">
    <molecule id="Q8N720-1"/>
    <property type="nucleotide sequence ID" value="NM_001009960.1"/>
</dbReference>
<dbReference type="RefSeq" id="NP_001077425.1">
    <molecule id="Q8N720-3"/>
    <property type="nucleotide sequence ID" value="NM_001083956.2"/>
</dbReference>
<dbReference type="RefSeq" id="NP_001078835.1">
    <molecule id="Q8N720-4"/>
    <property type="nucleotide sequence ID" value="NM_001085366.2"/>
</dbReference>
<dbReference type="RefSeq" id="NP_001078836.1">
    <molecule id="Q8N720-2"/>
    <property type="nucleotide sequence ID" value="NM_001085367.1"/>
</dbReference>
<dbReference type="RefSeq" id="NP_001078837.1">
    <molecule id="Q8N720-3"/>
    <property type="nucleotide sequence ID" value="NM_001085368.1"/>
</dbReference>
<dbReference type="RefSeq" id="NP_001350261.1">
    <molecule id="Q8N720-3"/>
    <property type="nucleotide sequence ID" value="NM_001363332.1"/>
</dbReference>
<dbReference type="RefSeq" id="NP_001350262.1">
    <molecule id="Q8N720-3"/>
    <property type="nucleotide sequence ID" value="NM_001363333.1"/>
</dbReference>
<dbReference type="RefSeq" id="NP_001350263.1">
    <molecule id="Q8N720-1"/>
    <property type="nucleotide sequence ID" value="NM_001363334.1"/>
</dbReference>
<dbReference type="RefSeq" id="NP_076966.1">
    <molecule id="Q8N720-2"/>
    <property type="nucleotide sequence ID" value="NM_024061.4"/>
</dbReference>
<dbReference type="RefSeq" id="NP_612503.1">
    <molecule id="Q8N720-1"/>
    <property type="nucleotide sequence ID" value="NM_138494.3"/>
</dbReference>
<dbReference type="RefSeq" id="XP_016868092.1">
    <property type="nucleotide sequence ID" value="XM_017012603.1"/>
</dbReference>
<dbReference type="RefSeq" id="XP_016868093.1">
    <property type="nucleotide sequence ID" value="XM_017012604.1"/>
</dbReference>
<dbReference type="RefSeq" id="XP_016868095.1">
    <property type="nucleotide sequence ID" value="XM_017012606.1"/>
</dbReference>
<dbReference type="RefSeq" id="XP_016868096.1">
    <property type="nucleotide sequence ID" value="XM_017012607.1"/>
</dbReference>
<dbReference type="RefSeq" id="XP_047276787.1">
    <molecule id="Q8N720-2"/>
    <property type="nucleotide sequence ID" value="XM_047420831.1"/>
</dbReference>
<dbReference type="RefSeq" id="XP_047276788.1">
    <molecule id="Q8N720-2"/>
    <property type="nucleotide sequence ID" value="XM_047420832.1"/>
</dbReference>
<dbReference type="RefSeq" id="XP_054214968.1">
    <molecule id="Q8N720-2"/>
    <property type="nucleotide sequence ID" value="XM_054358993.1"/>
</dbReference>
<dbReference type="RefSeq" id="XP_054214969.1">
    <molecule id="Q8N720-2"/>
    <property type="nucleotide sequence ID" value="XM_054358994.1"/>
</dbReference>
<dbReference type="PDB" id="8PK6">
    <property type="method" value="X-ray"/>
    <property type="resolution" value="3.21 A"/>
    <property type="chains" value="B/D/F=93-119"/>
</dbReference>
<dbReference type="PDBsum" id="8PK6"/>
<dbReference type="SMR" id="Q8N720"/>
<dbReference type="BioGRID" id="122495">
    <property type="interactions" value="182"/>
</dbReference>
<dbReference type="DIP" id="DIP-34108N"/>
<dbReference type="FunCoup" id="Q8N720">
    <property type="interactions" value="2015"/>
</dbReference>
<dbReference type="IntAct" id="Q8N720">
    <property type="interactions" value="171"/>
</dbReference>
<dbReference type="MINT" id="Q8N720"/>
<dbReference type="STRING" id="9606.ENSP00000393876"/>
<dbReference type="iPTMnet" id="Q8N720"/>
<dbReference type="PhosphoSitePlus" id="Q8N720"/>
<dbReference type="BioMuta" id="ZNF655"/>
<dbReference type="DMDM" id="116242863"/>
<dbReference type="jPOST" id="Q8N720"/>
<dbReference type="MassIVE" id="Q8N720"/>
<dbReference type="PaxDb" id="9606-ENSP00000393876"/>
<dbReference type="PeptideAtlas" id="Q8N720"/>
<dbReference type="ProteomicsDB" id="1117"/>
<dbReference type="ProteomicsDB" id="72255">
    <molecule id="Q8N720-1"/>
</dbReference>
<dbReference type="ProteomicsDB" id="72256">
    <molecule id="Q8N720-2"/>
</dbReference>
<dbReference type="ProteomicsDB" id="72257">
    <molecule id="Q8N720-3"/>
</dbReference>
<dbReference type="Pumba" id="Q8N720"/>
<dbReference type="Antibodypedia" id="16203">
    <property type="antibodies" value="86 antibodies from 14 providers"/>
</dbReference>
<dbReference type="DNASU" id="79027"/>
<dbReference type="Ensembl" id="ENST00000252713.9">
    <molecule id="Q8N720-1"/>
    <property type="protein sequence ID" value="ENSP00000252713.4"/>
    <property type="gene ID" value="ENSG00000197343.11"/>
</dbReference>
<dbReference type="Ensembl" id="ENST00000320583.9">
    <molecule id="Q8N720-2"/>
    <property type="protein sequence ID" value="ENSP00000322363.5"/>
    <property type="gene ID" value="ENSG00000197343.11"/>
</dbReference>
<dbReference type="Ensembl" id="ENST00000357864.6">
    <molecule id="Q8N720-4"/>
    <property type="protein sequence ID" value="ENSP00000350530.2"/>
    <property type="gene ID" value="ENSG00000197343.11"/>
</dbReference>
<dbReference type="Ensembl" id="ENST00000394163.2">
    <molecule id="Q8N720-1"/>
    <property type="protein sequence ID" value="ENSP00000377718.2"/>
    <property type="gene ID" value="ENSG00000197343.11"/>
</dbReference>
<dbReference type="Ensembl" id="ENST00000424881.5">
    <molecule id="Q8N720-3"/>
    <property type="protein sequence ID" value="ENSP00000393876.1"/>
    <property type="gene ID" value="ENSG00000197343.11"/>
</dbReference>
<dbReference type="Ensembl" id="ENST00000440391.5">
    <molecule id="Q8N720-4"/>
    <property type="protein sequence ID" value="ENSP00000396396.1"/>
    <property type="gene ID" value="ENSG00000197343.11"/>
</dbReference>
<dbReference type="Ensembl" id="ENST00000493277.5">
    <molecule id="Q8N720-3"/>
    <property type="protein sequence ID" value="ENSP00000419135.1"/>
    <property type="gene ID" value="ENSG00000197343.11"/>
</dbReference>
<dbReference type="GeneID" id="79027"/>
<dbReference type="KEGG" id="hsa:79027"/>
<dbReference type="MANE-Select" id="ENST00000252713.9">
    <property type="protein sequence ID" value="ENSP00000252713.4"/>
    <property type="RefSeq nucleotide sequence ID" value="NM_138494.3"/>
    <property type="RefSeq protein sequence ID" value="NP_612503.1"/>
</dbReference>
<dbReference type="UCSC" id="uc003urc.4">
    <molecule id="Q8N720-1"/>
    <property type="organism name" value="human"/>
</dbReference>
<dbReference type="AGR" id="HGNC:30899"/>
<dbReference type="CTD" id="79027"/>
<dbReference type="DisGeNET" id="79027"/>
<dbReference type="GeneCards" id="ZNF655"/>
<dbReference type="HGNC" id="HGNC:30899">
    <property type="gene designation" value="ZNF655"/>
</dbReference>
<dbReference type="HPA" id="ENSG00000197343">
    <property type="expression patterns" value="Low tissue specificity"/>
</dbReference>
<dbReference type="MIM" id="617891">
    <property type="type" value="gene"/>
</dbReference>
<dbReference type="neXtProt" id="NX_Q8N720"/>
<dbReference type="OpenTargets" id="ENSG00000197343"/>
<dbReference type="PharmGKB" id="PA134883537"/>
<dbReference type="VEuPathDB" id="HostDB:ENSG00000197343"/>
<dbReference type="eggNOG" id="KOG1721">
    <property type="taxonomic scope" value="Eukaryota"/>
</dbReference>
<dbReference type="GeneTree" id="ENSGT00760000119441"/>
<dbReference type="HOGENOM" id="CLU_127743_0_0_1"/>
<dbReference type="InParanoid" id="Q8N720"/>
<dbReference type="OMA" id="HQRIHHQ"/>
<dbReference type="OrthoDB" id="10018191at2759"/>
<dbReference type="PAN-GO" id="Q8N720">
    <property type="GO annotations" value="4 GO annotations based on evolutionary models"/>
</dbReference>
<dbReference type="PhylomeDB" id="Q8N720"/>
<dbReference type="TreeFam" id="TF344137"/>
<dbReference type="PathwayCommons" id="Q8N720"/>
<dbReference type="Reactome" id="R-HSA-212436">
    <property type="pathway name" value="Generic Transcription Pathway"/>
</dbReference>
<dbReference type="SignaLink" id="Q8N720"/>
<dbReference type="BioGRID-ORCS" id="79027">
    <property type="hits" value="16 hits in 1174 CRISPR screens"/>
</dbReference>
<dbReference type="ChiTaRS" id="ZNF655">
    <property type="organism name" value="human"/>
</dbReference>
<dbReference type="GeneWiki" id="ZNF655"/>
<dbReference type="GenomeRNAi" id="79027"/>
<dbReference type="Pharos" id="Q8N720">
    <property type="development level" value="Tbio"/>
</dbReference>
<dbReference type="PRO" id="PR:Q8N720"/>
<dbReference type="Proteomes" id="UP000005640">
    <property type="component" value="Chromosome 7"/>
</dbReference>
<dbReference type="RNAct" id="Q8N720">
    <property type="molecule type" value="protein"/>
</dbReference>
<dbReference type="Bgee" id="ENSG00000197343">
    <property type="expression patterns" value="Expressed in ileal mucosa and 181 other cell types or tissues"/>
</dbReference>
<dbReference type="ExpressionAtlas" id="Q8N720">
    <property type="expression patterns" value="baseline and differential"/>
</dbReference>
<dbReference type="GO" id="GO:0005737">
    <property type="term" value="C:cytoplasm"/>
    <property type="evidence" value="ECO:0000314"/>
    <property type="project" value="UniProtKB"/>
</dbReference>
<dbReference type="GO" id="GO:0005730">
    <property type="term" value="C:nucleolus"/>
    <property type="evidence" value="ECO:0000314"/>
    <property type="project" value="UniProtKB"/>
</dbReference>
<dbReference type="GO" id="GO:0005634">
    <property type="term" value="C:nucleus"/>
    <property type="evidence" value="ECO:0000314"/>
    <property type="project" value="UniProtKB"/>
</dbReference>
<dbReference type="GO" id="GO:0000981">
    <property type="term" value="F:DNA-binding transcription factor activity, RNA polymerase II-specific"/>
    <property type="evidence" value="ECO:0000318"/>
    <property type="project" value="GO_Central"/>
</dbReference>
<dbReference type="GO" id="GO:0000978">
    <property type="term" value="F:RNA polymerase II cis-regulatory region sequence-specific DNA binding"/>
    <property type="evidence" value="ECO:0000318"/>
    <property type="project" value="GO_Central"/>
</dbReference>
<dbReference type="GO" id="GO:0008270">
    <property type="term" value="F:zinc ion binding"/>
    <property type="evidence" value="ECO:0007669"/>
    <property type="project" value="UniProtKB-KW"/>
</dbReference>
<dbReference type="GO" id="GO:2000134">
    <property type="term" value="P:negative regulation of G1/S transition of mitotic cell cycle"/>
    <property type="evidence" value="ECO:0000314"/>
    <property type="project" value="UniProtKB"/>
</dbReference>
<dbReference type="GO" id="GO:0006357">
    <property type="term" value="P:regulation of transcription by RNA polymerase II"/>
    <property type="evidence" value="ECO:0000318"/>
    <property type="project" value="GO_Central"/>
</dbReference>
<dbReference type="FunFam" id="3.30.160.60:FF:000136">
    <property type="entry name" value="GLI family zinc finger 4"/>
    <property type="match status" value="1"/>
</dbReference>
<dbReference type="FunFam" id="3.30.160.60:FF:002129">
    <property type="entry name" value="Zinc finger protein 304"/>
    <property type="match status" value="1"/>
</dbReference>
<dbReference type="FunFam" id="3.30.160.60:FF:000895">
    <property type="entry name" value="Zinc finger protein 597"/>
    <property type="match status" value="1"/>
</dbReference>
<dbReference type="FunFam" id="3.30.160.60:FF:001627">
    <property type="entry name" value="Zinc finger protein 655"/>
    <property type="match status" value="1"/>
</dbReference>
<dbReference type="FunFam" id="3.30.160.60:FF:001856">
    <property type="entry name" value="Zinc finger protein 655"/>
    <property type="match status" value="1"/>
</dbReference>
<dbReference type="FunFam" id="3.30.160.60:FF:002139">
    <property type="entry name" value="Zinc finger protein 655"/>
    <property type="match status" value="1"/>
</dbReference>
<dbReference type="Gene3D" id="3.30.160.60">
    <property type="entry name" value="Classic Zinc Finger"/>
    <property type="match status" value="8"/>
</dbReference>
<dbReference type="InterPro" id="IPR050826">
    <property type="entry name" value="Krueppel_C2H2_ZnFinger"/>
</dbReference>
<dbReference type="InterPro" id="IPR036236">
    <property type="entry name" value="Znf_C2H2_sf"/>
</dbReference>
<dbReference type="InterPro" id="IPR013087">
    <property type="entry name" value="Znf_C2H2_type"/>
</dbReference>
<dbReference type="PANTHER" id="PTHR24377">
    <property type="entry name" value="IP01015P-RELATED"/>
    <property type="match status" value="1"/>
</dbReference>
<dbReference type="Pfam" id="PF00096">
    <property type="entry name" value="zf-C2H2"/>
    <property type="match status" value="5"/>
</dbReference>
<dbReference type="SMART" id="SM00355">
    <property type="entry name" value="ZnF_C2H2"/>
    <property type="match status" value="7"/>
</dbReference>
<dbReference type="SUPFAM" id="SSF57667">
    <property type="entry name" value="beta-beta-alpha zinc fingers"/>
    <property type="match status" value="6"/>
</dbReference>
<dbReference type="PROSITE" id="PS00028">
    <property type="entry name" value="ZINC_FINGER_C2H2_1"/>
    <property type="match status" value="6"/>
</dbReference>
<dbReference type="PROSITE" id="PS50157">
    <property type="entry name" value="ZINC_FINGER_C2H2_2"/>
    <property type="match status" value="6"/>
</dbReference>
<reference key="1">
    <citation type="journal article" date="2005" name="Oncogene">
        <title>Characterization of VIK-1: a new Vav-interacting Kruppel-like protein.</title>
        <authorList>
            <person name="Houlard M."/>
            <person name="Romero-Portillo F."/>
            <person name="Germani A."/>
            <person name="Depaux A."/>
            <person name="Regnier-Ricard F."/>
            <person name="Gisselbrecht S."/>
            <person name="Varin-Blank N."/>
        </authorList>
    </citation>
    <scope>NUCLEOTIDE SEQUENCE [MRNA] (ISOFORM 1)</scope>
    <scope>INTERACTION WITH VAV1 AND CDK4</scope>
</reference>
<reference key="2">
    <citation type="journal article" date="2004" name="Nat. Genet.">
        <title>Complete sequencing and characterization of 21,243 full-length human cDNAs.</title>
        <authorList>
            <person name="Ota T."/>
            <person name="Suzuki Y."/>
            <person name="Nishikawa T."/>
            <person name="Otsuki T."/>
            <person name="Sugiyama T."/>
            <person name="Irie R."/>
            <person name="Wakamatsu A."/>
            <person name="Hayashi K."/>
            <person name="Sato H."/>
            <person name="Nagai K."/>
            <person name="Kimura K."/>
            <person name="Makita H."/>
            <person name="Sekine M."/>
            <person name="Obayashi M."/>
            <person name="Nishi T."/>
            <person name="Shibahara T."/>
            <person name="Tanaka T."/>
            <person name="Ishii S."/>
            <person name="Yamamoto J."/>
            <person name="Saito K."/>
            <person name="Kawai Y."/>
            <person name="Isono Y."/>
            <person name="Nakamura Y."/>
            <person name="Nagahari K."/>
            <person name="Murakami K."/>
            <person name="Yasuda T."/>
            <person name="Iwayanagi T."/>
            <person name="Wagatsuma M."/>
            <person name="Shiratori A."/>
            <person name="Sudo H."/>
            <person name="Hosoiri T."/>
            <person name="Kaku Y."/>
            <person name="Kodaira H."/>
            <person name="Kondo H."/>
            <person name="Sugawara M."/>
            <person name="Takahashi M."/>
            <person name="Kanda K."/>
            <person name="Yokoi T."/>
            <person name="Furuya T."/>
            <person name="Kikkawa E."/>
            <person name="Omura Y."/>
            <person name="Abe K."/>
            <person name="Kamihara K."/>
            <person name="Katsuta N."/>
            <person name="Sato K."/>
            <person name="Tanikawa M."/>
            <person name="Yamazaki M."/>
            <person name="Ninomiya K."/>
            <person name="Ishibashi T."/>
            <person name="Yamashita H."/>
            <person name="Murakawa K."/>
            <person name="Fujimori K."/>
            <person name="Tanai H."/>
            <person name="Kimata M."/>
            <person name="Watanabe M."/>
            <person name="Hiraoka S."/>
            <person name="Chiba Y."/>
            <person name="Ishida S."/>
            <person name="Ono Y."/>
            <person name="Takiguchi S."/>
            <person name="Watanabe S."/>
            <person name="Yosida M."/>
            <person name="Hotuta T."/>
            <person name="Kusano J."/>
            <person name="Kanehori K."/>
            <person name="Takahashi-Fujii A."/>
            <person name="Hara H."/>
            <person name="Tanase T.-O."/>
            <person name="Nomura Y."/>
            <person name="Togiya S."/>
            <person name="Komai F."/>
            <person name="Hara R."/>
            <person name="Takeuchi K."/>
            <person name="Arita M."/>
            <person name="Imose N."/>
            <person name="Musashino K."/>
            <person name="Yuuki H."/>
            <person name="Oshima A."/>
            <person name="Sasaki N."/>
            <person name="Aotsuka S."/>
            <person name="Yoshikawa Y."/>
            <person name="Matsunawa H."/>
            <person name="Ichihara T."/>
            <person name="Shiohata N."/>
            <person name="Sano S."/>
            <person name="Moriya S."/>
            <person name="Momiyama H."/>
            <person name="Satoh N."/>
            <person name="Takami S."/>
            <person name="Terashima Y."/>
            <person name="Suzuki O."/>
            <person name="Nakagawa S."/>
            <person name="Senoh A."/>
            <person name="Mizoguchi H."/>
            <person name="Goto Y."/>
            <person name="Shimizu F."/>
            <person name="Wakebe H."/>
            <person name="Hishigaki H."/>
            <person name="Watanabe T."/>
            <person name="Sugiyama A."/>
            <person name="Takemoto M."/>
            <person name="Kawakami B."/>
            <person name="Yamazaki M."/>
            <person name="Watanabe K."/>
            <person name="Kumagai A."/>
            <person name="Itakura S."/>
            <person name="Fukuzumi Y."/>
            <person name="Fujimori Y."/>
            <person name="Komiyama M."/>
            <person name="Tashiro H."/>
            <person name="Tanigami A."/>
            <person name="Fujiwara T."/>
            <person name="Ono T."/>
            <person name="Yamada K."/>
            <person name="Fujii Y."/>
            <person name="Ozaki K."/>
            <person name="Hirao M."/>
            <person name="Ohmori Y."/>
            <person name="Kawabata A."/>
            <person name="Hikiji T."/>
            <person name="Kobatake N."/>
            <person name="Inagaki H."/>
            <person name="Ikema Y."/>
            <person name="Okamoto S."/>
            <person name="Okitani R."/>
            <person name="Kawakami T."/>
            <person name="Noguchi S."/>
            <person name="Itoh T."/>
            <person name="Shigeta K."/>
            <person name="Senba T."/>
            <person name="Matsumura K."/>
            <person name="Nakajima Y."/>
            <person name="Mizuno T."/>
            <person name="Morinaga M."/>
            <person name="Sasaki M."/>
            <person name="Togashi T."/>
            <person name="Oyama M."/>
            <person name="Hata H."/>
            <person name="Watanabe M."/>
            <person name="Komatsu T."/>
            <person name="Mizushima-Sugano J."/>
            <person name="Satoh T."/>
            <person name="Shirai Y."/>
            <person name="Takahashi Y."/>
            <person name="Nakagawa K."/>
            <person name="Okumura K."/>
            <person name="Nagase T."/>
            <person name="Nomura N."/>
            <person name="Kikuchi H."/>
            <person name="Masuho Y."/>
            <person name="Yamashita R."/>
            <person name="Nakai K."/>
            <person name="Yada T."/>
            <person name="Nakamura Y."/>
            <person name="Ohara O."/>
            <person name="Isogai T."/>
            <person name="Sugano S."/>
        </authorList>
    </citation>
    <scope>NUCLEOTIDE SEQUENCE [LARGE SCALE MRNA] (ISOFORMS 1; 3 AND 4)</scope>
    <source>
        <tissue>Brain</tissue>
        <tissue>Small intestine</tissue>
        <tissue>Trachea</tissue>
        <tissue>Uterus</tissue>
    </source>
</reference>
<reference key="3">
    <citation type="journal article" date="2003" name="Nature">
        <title>The DNA sequence of human chromosome 7.</title>
        <authorList>
            <person name="Hillier L.W."/>
            <person name="Fulton R.S."/>
            <person name="Fulton L.A."/>
            <person name="Graves T.A."/>
            <person name="Pepin K.H."/>
            <person name="Wagner-McPherson C."/>
            <person name="Layman D."/>
            <person name="Maas J."/>
            <person name="Jaeger S."/>
            <person name="Walker R."/>
            <person name="Wylie K."/>
            <person name="Sekhon M."/>
            <person name="Becker M.C."/>
            <person name="O'Laughlin M.D."/>
            <person name="Schaller M.E."/>
            <person name="Fewell G.A."/>
            <person name="Delehaunty K.D."/>
            <person name="Miner T.L."/>
            <person name="Nash W.E."/>
            <person name="Cordes M."/>
            <person name="Du H."/>
            <person name="Sun H."/>
            <person name="Edwards J."/>
            <person name="Bradshaw-Cordum H."/>
            <person name="Ali J."/>
            <person name="Andrews S."/>
            <person name="Isak A."/>
            <person name="Vanbrunt A."/>
            <person name="Nguyen C."/>
            <person name="Du F."/>
            <person name="Lamar B."/>
            <person name="Courtney L."/>
            <person name="Kalicki J."/>
            <person name="Ozersky P."/>
            <person name="Bielicki L."/>
            <person name="Scott K."/>
            <person name="Holmes A."/>
            <person name="Harkins R."/>
            <person name="Harris A."/>
            <person name="Strong C.M."/>
            <person name="Hou S."/>
            <person name="Tomlinson C."/>
            <person name="Dauphin-Kohlberg S."/>
            <person name="Kozlowicz-Reilly A."/>
            <person name="Leonard S."/>
            <person name="Rohlfing T."/>
            <person name="Rock S.M."/>
            <person name="Tin-Wollam A.-M."/>
            <person name="Abbott A."/>
            <person name="Minx P."/>
            <person name="Maupin R."/>
            <person name="Strowmatt C."/>
            <person name="Latreille P."/>
            <person name="Miller N."/>
            <person name="Johnson D."/>
            <person name="Murray J."/>
            <person name="Woessner J.P."/>
            <person name="Wendl M.C."/>
            <person name="Yang S.-P."/>
            <person name="Schultz B.R."/>
            <person name="Wallis J.W."/>
            <person name="Spieth J."/>
            <person name="Bieri T.A."/>
            <person name="Nelson J.O."/>
            <person name="Berkowicz N."/>
            <person name="Wohldmann P.E."/>
            <person name="Cook L.L."/>
            <person name="Hickenbotham M.T."/>
            <person name="Eldred J."/>
            <person name="Williams D."/>
            <person name="Bedell J.A."/>
            <person name="Mardis E.R."/>
            <person name="Clifton S.W."/>
            <person name="Chissoe S.L."/>
            <person name="Marra M.A."/>
            <person name="Raymond C."/>
            <person name="Haugen E."/>
            <person name="Gillett W."/>
            <person name="Zhou Y."/>
            <person name="James R."/>
            <person name="Phelps K."/>
            <person name="Iadanoto S."/>
            <person name="Bubb K."/>
            <person name="Simms E."/>
            <person name="Levy R."/>
            <person name="Clendenning J."/>
            <person name="Kaul R."/>
            <person name="Kent W.J."/>
            <person name="Furey T.S."/>
            <person name="Baertsch R.A."/>
            <person name="Brent M.R."/>
            <person name="Keibler E."/>
            <person name="Flicek P."/>
            <person name="Bork P."/>
            <person name="Suyama M."/>
            <person name="Bailey J.A."/>
            <person name="Portnoy M.E."/>
            <person name="Torrents D."/>
            <person name="Chinwalla A.T."/>
            <person name="Gish W.R."/>
            <person name="Eddy S.R."/>
            <person name="McPherson J.D."/>
            <person name="Olson M.V."/>
            <person name="Eichler E.E."/>
            <person name="Green E.D."/>
            <person name="Waterston R.H."/>
            <person name="Wilson R.K."/>
        </authorList>
    </citation>
    <scope>NUCLEOTIDE SEQUENCE [LARGE SCALE GENOMIC DNA]</scope>
</reference>
<reference key="4">
    <citation type="journal article" date="2003" name="Science">
        <title>Human chromosome 7: DNA sequence and biology.</title>
        <authorList>
            <person name="Scherer S.W."/>
            <person name="Cheung J."/>
            <person name="MacDonald J.R."/>
            <person name="Osborne L.R."/>
            <person name="Nakabayashi K."/>
            <person name="Herbrick J.-A."/>
            <person name="Carson A.R."/>
            <person name="Parker-Katiraee L."/>
            <person name="Skaug J."/>
            <person name="Khaja R."/>
            <person name="Zhang J."/>
            <person name="Hudek A.K."/>
            <person name="Li M."/>
            <person name="Haddad M."/>
            <person name="Duggan G.E."/>
            <person name="Fernandez B.A."/>
            <person name="Kanematsu E."/>
            <person name="Gentles S."/>
            <person name="Christopoulos C.C."/>
            <person name="Choufani S."/>
            <person name="Kwasnicka D."/>
            <person name="Zheng X.H."/>
            <person name="Lai Z."/>
            <person name="Nusskern D.R."/>
            <person name="Zhang Q."/>
            <person name="Gu Z."/>
            <person name="Lu F."/>
            <person name="Zeesman S."/>
            <person name="Nowaczyk M.J."/>
            <person name="Teshima I."/>
            <person name="Chitayat D."/>
            <person name="Shuman C."/>
            <person name="Weksberg R."/>
            <person name="Zackai E.H."/>
            <person name="Grebe T.A."/>
            <person name="Cox S.R."/>
            <person name="Kirkpatrick S.J."/>
            <person name="Rahman N."/>
            <person name="Friedman J.M."/>
            <person name="Heng H.H.Q."/>
            <person name="Pelicci P.G."/>
            <person name="Lo-Coco F."/>
            <person name="Belloni E."/>
            <person name="Shaffer L.G."/>
            <person name="Pober B."/>
            <person name="Morton C.C."/>
            <person name="Gusella J.F."/>
            <person name="Bruns G.A.P."/>
            <person name="Korf B.R."/>
            <person name="Quade B.J."/>
            <person name="Ligon A.H."/>
            <person name="Ferguson H."/>
            <person name="Higgins A.W."/>
            <person name="Leach N.T."/>
            <person name="Herrick S.R."/>
            <person name="Lemyre E."/>
            <person name="Farra C.G."/>
            <person name="Kim H.-G."/>
            <person name="Summers A.M."/>
            <person name="Gripp K.W."/>
            <person name="Roberts W."/>
            <person name="Szatmari P."/>
            <person name="Winsor E.J.T."/>
            <person name="Grzeschik K.-H."/>
            <person name="Teebi A."/>
            <person name="Minassian B.A."/>
            <person name="Kere J."/>
            <person name="Armengol L."/>
            <person name="Pujana M.A."/>
            <person name="Estivill X."/>
            <person name="Wilson M.D."/>
            <person name="Koop B.F."/>
            <person name="Tosi S."/>
            <person name="Moore G.E."/>
            <person name="Boright A.P."/>
            <person name="Zlotorynski E."/>
            <person name="Kerem B."/>
            <person name="Kroisel P.M."/>
            <person name="Petek E."/>
            <person name="Oscier D.G."/>
            <person name="Mould S.J."/>
            <person name="Doehner H."/>
            <person name="Doehner K."/>
            <person name="Rommens J.M."/>
            <person name="Vincent J.B."/>
            <person name="Venter J.C."/>
            <person name="Li P.W."/>
            <person name="Mural R.J."/>
            <person name="Adams M.D."/>
            <person name="Tsui L.-C."/>
        </authorList>
    </citation>
    <scope>NUCLEOTIDE SEQUENCE [LARGE SCALE GENOMIC DNA]</scope>
</reference>
<reference key="5">
    <citation type="submission" date="2005-09" db="EMBL/GenBank/DDBJ databases">
        <authorList>
            <person name="Mural R.J."/>
            <person name="Istrail S."/>
            <person name="Sutton G.G."/>
            <person name="Florea L."/>
            <person name="Halpern A.L."/>
            <person name="Mobarry C.M."/>
            <person name="Lippert R."/>
            <person name="Walenz B."/>
            <person name="Shatkay H."/>
            <person name="Dew I."/>
            <person name="Miller J.R."/>
            <person name="Flanigan M.J."/>
            <person name="Edwards N.J."/>
            <person name="Bolanos R."/>
            <person name="Fasulo D."/>
            <person name="Halldorsson B.V."/>
            <person name="Hannenhalli S."/>
            <person name="Turner R."/>
            <person name="Yooseph S."/>
            <person name="Lu F."/>
            <person name="Nusskern D.R."/>
            <person name="Shue B.C."/>
            <person name="Zheng X.H."/>
            <person name="Zhong F."/>
            <person name="Delcher A.L."/>
            <person name="Huson D.H."/>
            <person name="Kravitz S.A."/>
            <person name="Mouchard L."/>
            <person name="Reinert K."/>
            <person name="Remington K.A."/>
            <person name="Clark A.G."/>
            <person name="Waterman M.S."/>
            <person name="Eichler E.E."/>
            <person name="Adams M.D."/>
            <person name="Hunkapiller M.W."/>
            <person name="Myers E.W."/>
            <person name="Venter J.C."/>
        </authorList>
    </citation>
    <scope>NUCLEOTIDE SEQUENCE [LARGE SCALE GENOMIC DNA]</scope>
</reference>
<reference key="6">
    <citation type="journal article" date="2004" name="Genome Res.">
        <title>The status, quality, and expansion of the NIH full-length cDNA project: the Mammalian Gene Collection (MGC).</title>
        <authorList>
            <consortium name="The MGC Project Team"/>
        </authorList>
    </citation>
    <scope>NUCLEOTIDE SEQUENCE [LARGE SCALE MRNA] (ISOFORMS 1 AND 2)</scope>
    <scope>VARIANT ASP-52</scope>
    <source>
        <tissue>Brain</tissue>
        <tissue>Cervix</tissue>
        <tissue>Pancreas</tissue>
        <tissue>Placenta</tissue>
        <tissue>Skin</tissue>
    </source>
</reference>
<reference key="7">
    <citation type="journal article" date="2008" name="Mol. Cell">
        <title>Kinase-selective enrichment enables quantitative phosphoproteomics of the kinome across the cell cycle.</title>
        <authorList>
            <person name="Daub H."/>
            <person name="Olsen J.V."/>
            <person name="Bairlein M."/>
            <person name="Gnad F."/>
            <person name="Oppermann F.S."/>
            <person name="Korner R."/>
            <person name="Greff Z."/>
            <person name="Keri G."/>
            <person name="Stemmann O."/>
            <person name="Mann M."/>
        </authorList>
    </citation>
    <scope>PHOSPHORYLATION [LARGE SCALE ANALYSIS] AT SER-60 (ISOFORM 2)</scope>
    <scope>IDENTIFICATION BY MASS SPECTROMETRY [LARGE SCALE ANALYSIS]</scope>
    <source>
        <tissue>Cervix carcinoma</tissue>
    </source>
</reference>
<reference key="8">
    <citation type="journal article" date="2008" name="Proc. Natl. Acad. Sci. U.S.A.">
        <title>A quantitative atlas of mitotic phosphorylation.</title>
        <authorList>
            <person name="Dephoure N."/>
            <person name="Zhou C."/>
            <person name="Villen J."/>
            <person name="Beausoleil S.A."/>
            <person name="Bakalarski C.E."/>
            <person name="Elledge S.J."/>
            <person name="Gygi S.P."/>
        </authorList>
    </citation>
    <scope>PHOSPHORYLATION [LARGE SCALE ANALYSIS] AT SER-60 (ISOFORM 2)</scope>
    <scope>IDENTIFICATION BY MASS SPECTROMETRY [LARGE SCALE ANALYSIS]</scope>
    <source>
        <tissue>Cervix carcinoma</tissue>
    </source>
</reference>
<reference key="9">
    <citation type="journal article" date="2010" name="Sci. Signal.">
        <title>Quantitative phosphoproteomics reveals widespread full phosphorylation site occupancy during mitosis.</title>
        <authorList>
            <person name="Olsen J.V."/>
            <person name="Vermeulen M."/>
            <person name="Santamaria A."/>
            <person name="Kumar C."/>
            <person name="Miller M.L."/>
            <person name="Jensen L.J."/>
            <person name="Gnad F."/>
            <person name="Cox J."/>
            <person name="Jensen T.S."/>
            <person name="Nigg E.A."/>
            <person name="Brunak S."/>
            <person name="Mann M."/>
        </authorList>
    </citation>
    <scope>PHOSPHORYLATION [LARGE SCALE ANALYSIS] AT SER-60 (ISOFORM 2)</scope>
    <scope>IDENTIFICATION BY MASS SPECTROMETRY [LARGE SCALE ANALYSIS]</scope>
    <source>
        <tissue>Cervix carcinoma</tissue>
    </source>
</reference>
<reference key="10">
    <citation type="journal article" date="2017" name="Nat. Struct. Mol. Biol.">
        <title>Site-specific mapping of the human SUMO proteome reveals co-modification with phosphorylation.</title>
        <authorList>
            <person name="Hendriks I.A."/>
            <person name="Lyon D."/>
            <person name="Young C."/>
            <person name="Jensen L.J."/>
            <person name="Vertegaal A.C."/>
            <person name="Nielsen M.L."/>
        </authorList>
    </citation>
    <scope>SUMOYLATION [LARGE SCALE ANALYSIS] AT LYS-77; LYS-190 AND LYS-201</scope>
    <scope>IDENTIFICATION BY MASS SPECTROMETRY [LARGE SCALE ANALYSIS]</scope>
</reference>
<reference key="11">
    <citation type="journal article" date="2024" name="Mol. Cell">
        <title>Structural basis of the Integrator complex assembly and association with transcription factors.</title>
        <authorList>
            <person name="Razew M."/>
            <person name="Fraudeau A."/>
            <person name="Pfleiderer M.M."/>
            <person name="Linares R."/>
            <person name="Galej W.P."/>
        </authorList>
    </citation>
    <scope>INTERACTION WITH INTS13</scope>
    <scope>MUTAGENESIS OF 102-ILE-LEU-103; 106-PHE-LEU-107 AND 152-ARG-ILE-153</scope>
</reference>
<reference evidence="13" key="12">
    <citation type="journal article" date="2024" name="Mol. Cell">
        <title>Basis of gene-specific transcription regulation by the Integrator complex.</title>
        <authorList>
            <person name="Sabath K."/>
            <person name="Nabih A."/>
            <person name="Arnold C."/>
            <person name="Moussa R."/>
            <person name="Domjan D."/>
            <person name="Zaugg J.B."/>
            <person name="Jonas S."/>
        </authorList>
    </citation>
    <scope>X-RAY CRYSTALLOGRAPHY (3.21 ANGSTROMS) OF 93-119 IN COMPLEX WITH THE INTEGRATOR COMPLEX</scope>
    <scope>INTERACTION WITH INTS13</scope>
    <scope>MUTAGENESIS OF ILE-102; PHE-106; TYR-108 AND PHE-113</scope>
</reference>
<accession>Q8N720</accession>
<accession>A4D291</accession>
<accession>A6NGD3</accession>
<accession>B4E3M4</accession>
<accession>B7Z9Q9</accession>
<accession>D6W5T4</accession>
<accession>Q8IV00</accession>
<accession>Q8TA89</accession>
<accession>Q96EZ3</accession>
<accession>Q9BQ85</accession>
<keyword id="KW-0002">3D-structure</keyword>
<keyword id="KW-0025">Alternative splicing</keyword>
<keyword id="KW-0238">DNA-binding</keyword>
<keyword id="KW-1017">Isopeptide bond</keyword>
<keyword id="KW-0479">Metal-binding</keyword>
<keyword id="KW-0539">Nucleus</keyword>
<keyword id="KW-0597">Phosphoprotein</keyword>
<keyword id="KW-1267">Proteomics identification</keyword>
<keyword id="KW-1185">Reference proteome</keyword>
<keyword id="KW-0677">Repeat</keyword>
<keyword id="KW-0804">Transcription</keyword>
<keyword id="KW-0805">Transcription regulation</keyword>
<keyword id="KW-0832">Ubl conjugation</keyword>
<keyword id="KW-0862">Zinc</keyword>
<keyword id="KW-0863">Zinc-finger</keyword>